<sequence>MSQSNRELVVDFLSYKLSQKGYSWSQFSDVEENRTEAPEETEAERETPSAINGNPSWHLADSPAVNGATGHSSSLDAREVIPMAAVKQALREAGDEFELRYRRAFSDLTSQLHITPGTAYQSFEQVVNELFRDGVNWGRIVAFFSFGGALCVESVDKEMQVLVSRIASWMATYLNDHLEPWIQENGGWDTFVDLYGNNAAAESRKGQERFNRWFLTGMTVAGVVLLGSLFSRK</sequence>
<dbReference type="EMBL" id="X83574">
    <property type="protein sequence ID" value="CAA58557.1"/>
    <property type="molecule type" value="mRNA"/>
</dbReference>
<dbReference type="EMBL" id="L35049">
    <property type="protein sequence ID" value="AAA51039.1"/>
    <property type="molecule type" value="mRNA"/>
</dbReference>
<dbReference type="EMBL" id="L35048">
    <property type="protein sequence ID" value="AAA51040.1"/>
    <property type="molecule type" value="mRNA"/>
</dbReference>
<dbReference type="EMBL" id="U10102">
    <property type="protein sequence ID" value="AAA82174.1"/>
    <property type="molecule type" value="mRNA"/>
</dbReference>
<dbReference type="EMBL" id="U10101">
    <property type="protein sequence ID" value="AAA82173.1"/>
    <property type="molecule type" value="mRNA"/>
</dbReference>
<dbReference type="EMBL" id="U10100">
    <property type="protein sequence ID" value="AAA82172.1"/>
    <property type="molecule type" value="mRNA"/>
</dbReference>
<dbReference type="EMBL" id="U51278">
    <property type="protein sequence ID" value="AAC53459.1"/>
    <property type="molecule type" value="mRNA"/>
</dbReference>
<dbReference type="EMBL" id="U51279">
    <property type="protein sequence ID" value="AAC53460.1"/>
    <property type="molecule type" value="mRNA"/>
</dbReference>
<dbReference type="EMBL" id="U78031">
    <property type="protein sequence ID" value="AAB96881.1"/>
    <property type="molecule type" value="Genomic_DNA"/>
</dbReference>
<dbReference type="EMBL" id="U78030">
    <property type="protein sequence ID" value="AAB96881.1"/>
    <property type="status" value="JOINED"/>
    <property type="molecule type" value="Genomic_DNA"/>
</dbReference>
<dbReference type="CCDS" id="CCDS16899.1">
    <molecule id="Q64373-1"/>
</dbReference>
<dbReference type="PIR" id="I49055">
    <property type="entry name" value="I49055"/>
</dbReference>
<dbReference type="PIR" id="I49056">
    <property type="entry name" value="I49056"/>
</dbReference>
<dbReference type="PIR" id="I49057">
    <property type="entry name" value="I49057"/>
</dbReference>
<dbReference type="RefSeq" id="NP_001276645.1">
    <molecule id="Q64373-1"/>
    <property type="nucleotide sequence ID" value="NM_001289716.2"/>
</dbReference>
<dbReference type="RefSeq" id="NP_001276646.1">
    <molecule id="Q64373-1"/>
    <property type="nucleotide sequence ID" value="NM_001289717.2"/>
</dbReference>
<dbReference type="RefSeq" id="NP_001341982.1">
    <molecule id="Q64373-1"/>
    <property type="nucleotide sequence ID" value="NM_001355053.2"/>
</dbReference>
<dbReference type="RefSeq" id="NP_001403825.1">
    <molecule id="Q64373-1"/>
    <property type="nucleotide sequence ID" value="NM_001416896.1"/>
</dbReference>
<dbReference type="RefSeq" id="NP_001403826.1">
    <molecule id="Q64373-1"/>
    <property type="nucleotide sequence ID" value="NM_001416897.1"/>
</dbReference>
<dbReference type="RefSeq" id="NP_001403827.1">
    <molecule id="Q64373-1"/>
    <property type="nucleotide sequence ID" value="NM_001416898.1"/>
</dbReference>
<dbReference type="RefSeq" id="NP_001403828.1">
    <molecule id="Q64373-1"/>
    <property type="nucleotide sequence ID" value="NM_001416899.1"/>
</dbReference>
<dbReference type="RefSeq" id="NP_033873.3">
    <molecule id="Q64373-1"/>
    <property type="nucleotide sequence ID" value="NM_009743.5"/>
</dbReference>
<dbReference type="RefSeq" id="XP_006498672.1">
    <property type="nucleotide sequence ID" value="XM_006498609.3"/>
</dbReference>
<dbReference type="RefSeq" id="XP_006498674.1">
    <property type="nucleotide sequence ID" value="XM_006498611.3"/>
</dbReference>
<dbReference type="RefSeq" id="XP_006498675.1">
    <property type="nucleotide sequence ID" value="XM_006498612.2"/>
</dbReference>
<dbReference type="RefSeq" id="XP_011237562.1">
    <property type="nucleotide sequence ID" value="XM_011239260.2"/>
</dbReference>
<dbReference type="PDB" id="1PQ0">
    <property type="method" value="X-ray"/>
    <property type="resolution" value="2.20 A"/>
    <property type="chains" value="A=1-196"/>
</dbReference>
<dbReference type="PDB" id="1PQ1">
    <property type="method" value="X-ray"/>
    <property type="resolution" value="1.65 A"/>
    <property type="chains" value="A=1-196"/>
</dbReference>
<dbReference type="PDB" id="2BZW">
    <property type="method" value="X-ray"/>
    <property type="resolution" value="2.30 A"/>
    <property type="chains" value="A=1-211"/>
</dbReference>
<dbReference type="PDB" id="3IHC">
    <property type="method" value="X-ray"/>
    <property type="resolution" value="1.85 A"/>
    <property type="chains" value="A=1-196"/>
</dbReference>
<dbReference type="PDB" id="3IHD">
    <property type="method" value="X-ray"/>
    <property type="resolution" value="1.88 A"/>
    <property type="chains" value="A=1-196"/>
</dbReference>
<dbReference type="PDB" id="3IHE">
    <property type="method" value="X-ray"/>
    <property type="resolution" value="3.00 A"/>
    <property type="chains" value="A=1-196"/>
</dbReference>
<dbReference type="PDB" id="3IHF">
    <property type="method" value="X-ray"/>
    <property type="resolution" value="2.28 A"/>
    <property type="chains" value="A/B/C/D=1-196"/>
</dbReference>
<dbReference type="PDB" id="3IIG">
    <property type="method" value="X-ray"/>
    <property type="resolution" value="2.30 A"/>
    <property type="chains" value="A=1-196"/>
</dbReference>
<dbReference type="PDB" id="3IIH">
    <property type="method" value="X-ray"/>
    <property type="resolution" value="2.75 A"/>
    <property type="chains" value="A=1-196"/>
</dbReference>
<dbReference type="PDB" id="3ILB">
    <property type="method" value="X-ray"/>
    <property type="resolution" value="2.38 A"/>
    <property type="chains" value="A/N=1-196"/>
</dbReference>
<dbReference type="PDB" id="3ILC">
    <property type="method" value="X-ray"/>
    <property type="resolution" value="1.64 A"/>
    <property type="chains" value="A=1-196"/>
</dbReference>
<dbReference type="PDB" id="4YJ4">
    <property type="method" value="X-ray"/>
    <property type="resolution" value="2.10 A"/>
    <property type="chains" value="A=1-196"/>
</dbReference>
<dbReference type="PDB" id="4YK9">
    <property type="method" value="X-ray"/>
    <property type="resolution" value="1.70 A"/>
    <property type="chains" value="A/F=2-196"/>
</dbReference>
<dbReference type="PDB" id="5C3G">
    <property type="method" value="X-ray"/>
    <property type="resolution" value="2.45 A"/>
    <property type="chains" value="A=1-26"/>
</dbReference>
<dbReference type="PDB" id="7WJH">
    <property type="method" value="X-ray"/>
    <property type="resolution" value="1.70 A"/>
    <property type="chains" value="A=1-42, A=85-196"/>
</dbReference>
<dbReference type="PDB" id="7Y99">
    <property type="method" value="X-ray"/>
    <property type="resolution" value="1.90 A"/>
    <property type="chains" value="A=1-196"/>
</dbReference>
<dbReference type="PDBsum" id="1PQ0"/>
<dbReference type="PDBsum" id="1PQ1"/>
<dbReference type="PDBsum" id="2BZW"/>
<dbReference type="PDBsum" id="3IHC"/>
<dbReference type="PDBsum" id="3IHD"/>
<dbReference type="PDBsum" id="3IHE"/>
<dbReference type="PDBsum" id="3IHF"/>
<dbReference type="PDBsum" id="3IIG"/>
<dbReference type="PDBsum" id="3IIH"/>
<dbReference type="PDBsum" id="3ILB"/>
<dbReference type="PDBsum" id="3ILC"/>
<dbReference type="PDBsum" id="4YJ4"/>
<dbReference type="PDBsum" id="4YK9"/>
<dbReference type="PDBsum" id="5C3G"/>
<dbReference type="PDBsum" id="7WJH"/>
<dbReference type="PDBsum" id="7Y99"/>
<dbReference type="BMRB" id="Q64373"/>
<dbReference type="SMR" id="Q64373"/>
<dbReference type="BioGRID" id="198323">
    <property type="interactions" value="26"/>
</dbReference>
<dbReference type="ComplexPortal" id="CPX-2021">
    <molecule id="Q64373-1"/>
    <property type="entry name" value="BAD:BCL-XL complex"/>
</dbReference>
<dbReference type="ComplexPortal" id="CPX-2025">
    <molecule id="Q64373-1"/>
    <property type="entry name" value="BIM:BCL-XL complex"/>
</dbReference>
<dbReference type="ComplexPortal" id="CPX-2029">
    <molecule id="Q64373-1"/>
    <property type="entry name" value="PUMA:BCL-XL complex"/>
</dbReference>
<dbReference type="ComplexPortal" id="CPX-2037">
    <molecule id="Q64373-1"/>
    <property type="entry name" value="BID:BCL-XL complex"/>
</dbReference>
<dbReference type="ComplexPortal" id="CPX-299">
    <molecule id="Q64373-1"/>
    <property type="entry name" value="BCL-XL complex"/>
</dbReference>
<dbReference type="CORUM" id="Q64373"/>
<dbReference type="ELM" id="Q64373"/>
<dbReference type="FunCoup" id="Q64373">
    <property type="interactions" value="1699"/>
</dbReference>
<dbReference type="IntAct" id="Q64373">
    <property type="interactions" value="9"/>
</dbReference>
<dbReference type="STRING" id="10090.ENSMUSP00000105445"/>
<dbReference type="BindingDB" id="Q64373"/>
<dbReference type="ChEMBL" id="CHEMBL3309112"/>
<dbReference type="iPTMnet" id="Q64373"/>
<dbReference type="PhosphoSitePlus" id="Q64373"/>
<dbReference type="PaxDb" id="10090-ENSMUSP00000007803"/>
<dbReference type="ProteomicsDB" id="273510">
    <molecule id="Q64373-1"/>
</dbReference>
<dbReference type="ProteomicsDB" id="273511">
    <molecule id="Q64373-2"/>
</dbReference>
<dbReference type="ProteomicsDB" id="273512">
    <molecule id="Q64373-3"/>
</dbReference>
<dbReference type="ProteomicsDB" id="273513">
    <molecule id="Q64373-4"/>
</dbReference>
<dbReference type="Pumba" id="Q64373"/>
<dbReference type="Antibodypedia" id="3430">
    <property type="antibodies" value="2076 antibodies from 54 providers"/>
</dbReference>
<dbReference type="DNASU" id="12048"/>
<dbReference type="Ensembl" id="ENSMUST00000007803.12">
    <molecule id="Q64373-1"/>
    <property type="protein sequence ID" value="ENSMUSP00000007803.6"/>
    <property type="gene ID" value="ENSMUSG00000007659.19"/>
</dbReference>
<dbReference type="Ensembl" id="ENSMUST00000109820.5">
    <molecule id="Q64373-1"/>
    <property type="protein sequence ID" value="ENSMUSP00000105445.4"/>
    <property type="gene ID" value="ENSMUSG00000007659.19"/>
</dbReference>
<dbReference type="Ensembl" id="ENSMUST00000134902.2">
    <molecule id="Q64373-3"/>
    <property type="protein sequence ID" value="ENSMUSP00000134614.2"/>
    <property type="gene ID" value="ENSMUSG00000007659.19"/>
</dbReference>
<dbReference type="Ensembl" id="ENSMUST00000140436.2">
    <molecule id="Q64373-3"/>
    <property type="protein sequence ID" value="ENSMUSP00000134596.2"/>
    <property type="gene ID" value="ENSMUSG00000007659.19"/>
</dbReference>
<dbReference type="GeneID" id="12048"/>
<dbReference type="KEGG" id="mmu:12048"/>
<dbReference type="UCSC" id="uc008ngi.2">
    <molecule id="Q64373-2"/>
    <property type="organism name" value="mouse"/>
</dbReference>
<dbReference type="UCSC" id="uc008ngj.2">
    <molecule id="Q64373-1"/>
    <property type="organism name" value="mouse"/>
</dbReference>
<dbReference type="UCSC" id="uc008ngn.2">
    <molecule id="Q64373-3"/>
    <property type="organism name" value="mouse"/>
</dbReference>
<dbReference type="AGR" id="MGI:88139"/>
<dbReference type="CTD" id="598"/>
<dbReference type="MGI" id="MGI:88139">
    <property type="gene designation" value="Bcl2l1"/>
</dbReference>
<dbReference type="VEuPathDB" id="HostDB:ENSMUSG00000007659"/>
<dbReference type="eggNOG" id="KOG4728">
    <property type="taxonomic scope" value="Eukaryota"/>
</dbReference>
<dbReference type="GeneTree" id="ENSGT01130000278332"/>
<dbReference type="InParanoid" id="Q64373"/>
<dbReference type="OMA" id="HAPTSHI"/>
<dbReference type="OrthoDB" id="6021377at2759"/>
<dbReference type="PhylomeDB" id="Q64373"/>
<dbReference type="TreeFam" id="TF315834"/>
<dbReference type="Reactome" id="R-MMU-111453">
    <property type="pathway name" value="BH3-only proteins associate with and inactivate anti-apoptotic BCL-2 members"/>
</dbReference>
<dbReference type="Reactome" id="R-MMU-844455">
    <property type="pathway name" value="The NLRP1 inflammasome"/>
</dbReference>
<dbReference type="Reactome" id="R-MMU-9648002">
    <property type="pathway name" value="RAS processing"/>
</dbReference>
<dbReference type="BioGRID-ORCS" id="12048">
    <property type="hits" value="18 hits in 80 CRISPR screens"/>
</dbReference>
<dbReference type="ChiTaRS" id="Bcl2l1">
    <property type="organism name" value="mouse"/>
</dbReference>
<dbReference type="EvolutionaryTrace" id="Q64373"/>
<dbReference type="PRO" id="PR:Q64373"/>
<dbReference type="Proteomes" id="UP000000589">
    <property type="component" value="Chromosome 2"/>
</dbReference>
<dbReference type="RNAct" id="Q64373">
    <property type="molecule type" value="protein"/>
</dbReference>
<dbReference type="Bgee" id="ENSMUSG00000007659">
    <property type="expression patterns" value="Expressed in spermatocyte and 264 other cell types or tissues"/>
</dbReference>
<dbReference type="ExpressionAtlas" id="Q64373">
    <property type="expression patterns" value="baseline and differential"/>
</dbReference>
<dbReference type="GO" id="GO:0097136">
    <property type="term" value="C:Bcl-2 family protein complex"/>
    <property type="evidence" value="ECO:0000266"/>
    <property type="project" value="ComplexPortal"/>
</dbReference>
<dbReference type="GO" id="GO:0005813">
    <property type="term" value="C:centrosome"/>
    <property type="evidence" value="ECO:0000250"/>
    <property type="project" value="UniProtKB"/>
</dbReference>
<dbReference type="GO" id="GO:0005829">
    <property type="term" value="C:cytosol"/>
    <property type="evidence" value="ECO:0000314"/>
    <property type="project" value="MGI"/>
</dbReference>
<dbReference type="GO" id="GO:0005783">
    <property type="term" value="C:endoplasmic reticulum"/>
    <property type="evidence" value="ECO:0000314"/>
    <property type="project" value="MGI"/>
</dbReference>
<dbReference type="GO" id="GO:0016020">
    <property type="term" value="C:membrane"/>
    <property type="evidence" value="ECO:0000314"/>
    <property type="project" value="MGI"/>
</dbReference>
<dbReference type="GO" id="GO:0005743">
    <property type="term" value="C:mitochondrial inner membrane"/>
    <property type="evidence" value="ECO:0007669"/>
    <property type="project" value="UniProtKB-SubCell"/>
</dbReference>
<dbReference type="GO" id="GO:0005759">
    <property type="term" value="C:mitochondrial matrix"/>
    <property type="evidence" value="ECO:0007669"/>
    <property type="project" value="UniProtKB-SubCell"/>
</dbReference>
<dbReference type="GO" id="GO:0031966">
    <property type="term" value="C:mitochondrial membrane"/>
    <property type="evidence" value="ECO:0000314"/>
    <property type="project" value="MGI"/>
</dbReference>
<dbReference type="GO" id="GO:0005741">
    <property type="term" value="C:mitochondrial outer membrane"/>
    <property type="evidence" value="ECO:0000314"/>
    <property type="project" value="MGI"/>
</dbReference>
<dbReference type="GO" id="GO:0005739">
    <property type="term" value="C:mitochondrion"/>
    <property type="evidence" value="ECO:0000314"/>
    <property type="project" value="MGI"/>
</dbReference>
<dbReference type="GO" id="GO:0031965">
    <property type="term" value="C:nuclear membrane"/>
    <property type="evidence" value="ECO:0007669"/>
    <property type="project" value="UniProtKB-SubCell"/>
</dbReference>
<dbReference type="GO" id="GO:0030672">
    <property type="term" value="C:synaptic vesicle membrane"/>
    <property type="evidence" value="ECO:0007669"/>
    <property type="project" value="UniProtKB-SubCell"/>
</dbReference>
<dbReference type="GO" id="GO:0051434">
    <property type="term" value="F:BH3 domain binding"/>
    <property type="evidence" value="ECO:0007669"/>
    <property type="project" value="Ensembl"/>
</dbReference>
<dbReference type="GO" id="GO:0042802">
    <property type="term" value="F:identical protein binding"/>
    <property type="evidence" value="ECO:0007669"/>
    <property type="project" value="Ensembl"/>
</dbReference>
<dbReference type="GO" id="GO:0019901">
    <property type="term" value="F:protein kinase binding"/>
    <property type="evidence" value="ECO:0007669"/>
    <property type="project" value="Ensembl"/>
</dbReference>
<dbReference type="GO" id="GO:0006915">
    <property type="term" value="P:apoptotic process"/>
    <property type="evidence" value="ECO:0000315"/>
    <property type="project" value="MGI"/>
</dbReference>
<dbReference type="GO" id="GO:0071839">
    <property type="term" value="P:apoptotic process in bone marrow cell"/>
    <property type="evidence" value="ECO:0000315"/>
    <property type="project" value="MGI"/>
</dbReference>
<dbReference type="GO" id="GO:0071312">
    <property type="term" value="P:cellular response to alkaloid"/>
    <property type="evidence" value="ECO:0000314"/>
    <property type="project" value="MGI"/>
</dbReference>
<dbReference type="GO" id="GO:0071230">
    <property type="term" value="P:cellular response to amino acid stimulus"/>
    <property type="evidence" value="ECO:0000315"/>
    <property type="project" value="MGI"/>
</dbReference>
<dbReference type="GO" id="GO:0071480">
    <property type="term" value="P:cellular response to gamma radiation"/>
    <property type="evidence" value="ECO:0000315"/>
    <property type="project" value="MGI"/>
</dbReference>
<dbReference type="GO" id="GO:0051607">
    <property type="term" value="P:defense response to virus"/>
    <property type="evidence" value="ECO:0007669"/>
    <property type="project" value="Ensembl"/>
</dbReference>
<dbReference type="GO" id="GO:0097048">
    <property type="term" value="P:dendritic cell apoptotic process"/>
    <property type="evidence" value="ECO:0000314"/>
    <property type="project" value="MGI"/>
</dbReference>
<dbReference type="GO" id="GO:0044565">
    <property type="term" value="P:dendritic cell proliferation"/>
    <property type="evidence" value="ECO:0000314"/>
    <property type="project" value="MGI"/>
</dbReference>
<dbReference type="GO" id="GO:0035234">
    <property type="term" value="P:ectopic germ cell programmed cell death"/>
    <property type="evidence" value="ECO:0000315"/>
    <property type="project" value="MGI"/>
</dbReference>
<dbReference type="GO" id="GO:0050673">
    <property type="term" value="P:epithelial cell proliferation"/>
    <property type="evidence" value="ECO:0000314"/>
    <property type="project" value="MGI"/>
</dbReference>
<dbReference type="GO" id="GO:0097192">
    <property type="term" value="P:extrinsic apoptotic signaling pathway in absence of ligand"/>
    <property type="evidence" value="ECO:0000315"/>
    <property type="project" value="MGI"/>
</dbReference>
<dbReference type="GO" id="GO:0009566">
    <property type="term" value="P:fertilization"/>
    <property type="evidence" value="ECO:0000316"/>
    <property type="project" value="MGI"/>
</dbReference>
<dbReference type="GO" id="GO:0007281">
    <property type="term" value="P:germ cell development"/>
    <property type="evidence" value="ECO:0000315"/>
    <property type="project" value="MGI"/>
</dbReference>
<dbReference type="GO" id="GO:0097284">
    <property type="term" value="P:hepatocyte apoptotic process"/>
    <property type="evidence" value="ECO:0000315"/>
    <property type="project" value="MGI"/>
</dbReference>
<dbReference type="GO" id="GO:0001701">
    <property type="term" value="P:in utero embryonic development"/>
    <property type="evidence" value="ECO:0000315"/>
    <property type="project" value="MGI"/>
</dbReference>
<dbReference type="GO" id="GO:0008630">
    <property type="term" value="P:intrinsic apoptotic signaling pathway in response to DNA damage"/>
    <property type="evidence" value="ECO:0000315"/>
    <property type="project" value="MGI"/>
</dbReference>
<dbReference type="GO" id="GO:0008584">
    <property type="term" value="P:male gonad development"/>
    <property type="evidence" value="ECO:0000315"/>
    <property type="project" value="MGI"/>
</dbReference>
<dbReference type="GO" id="GO:0007005">
    <property type="term" value="P:mitochondrion organization"/>
    <property type="evidence" value="ECO:0000316"/>
    <property type="project" value="MGI"/>
</dbReference>
<dbReference type="GO" id="GO:0043066">
    <property type="term" value="P:negative regulation of apoptotic process"/>
    <property type="evidence" value="ECO:0000314"/>
    <property type="project" value="MGI"/>
</dbReference>
<dbReference type="GO" id="GO:2000669">
    <property type="term" value="P:negative regulation of dendritic cell apoptotic process"/>
    <property type="evidence" value="ECO:0000314"/>
    <property type="project" value="MGI"/>
</dbReference>
<dbReference type="GO" id="GO:0051093">
    <property type="term" value="P:negative regulation of developmental process"/>
    <property type="evidence" value="ECO:0000315"/>
    <property type="project" value="MGI"/>
</dbReference>
<dbReference type="GO" id="GO:1902236">
    <property type="term" value="P:negative regulation of endoplasmic reticulum stress-induced intrinsic apoptotic signaling pathway"/>
    <property type="evidence" value="ECO:0000250"/>
    <property type="project" value="UniProtKB"/>
</dbReference>
<dbReference type="GO" id="GO:1900118">
    <property type="term" value="P:negative regulation of execution phase of apoptosis"/>
    <property type="evidence" value="ECO:0000250"/>
    <property type="project" value="UniProtKB"/>
</dbReference>
<dbReference type="GO" id="GO:1902042">
    <property type="term" value="P:negative regulation of extrinsic apoptotic signaling pathway via death domain receptors"/>
    <property type="evidence" value="ECO:0000266"/>
    <property type="project" value="MGI"/>
</dbReference>
<dbReference type="GO" id="GO:1902230">
    <property type="term" value="P:negative regulation of intrinsic apoptotic signaling pathway in response to DNA damage"/>
    <property type="evidence" value="ECO:0007669"/>
    <property type="project" value="Ensembl"/>
</dbReference>
<dbReference type="GO" id="GO:1901029">
    <property type="term" value="P:negative regulation of mitochondrial outer membrane permeabilization involved in apoptotic signaling pathway"/>
    <property type="evidence" value="ECO:0000266"/>
    <property type="project" value="ComplexPortal"/>
</dbReference>
<dbReference type="GO" id="GO:0043524">
    <property type="term" value="P:negative regulation of neuron apoptotic process"/>
    <property type="evidence" value="ECO:0000314"/>
    <property type="project" value="MGI"/>
</dbReference>
<dbReference type="GO" id="GO:1903077">
    <property type="term" value="P:negative regulation of protein localization to plasma membrane"/>
    <property type="evidence" value="ECO:0007669"/>
    <property type="project" value="Ensembl"/>
</dbReference>
<dbReference type="GO" id="GO:0090201">
    <property type="term" value="P:negative regulation of release of cytochrome c from mitochondria"/>
    <property type="evidence" value="ECO:0000266"/>
    <property type="project" value="ComplexPortal"/>
</dbReference>
<dbReference type="GO" id="GO:2000242">
    <property type="term" value="P:negative regulation of reproductive process"/>
    <property type="evidence" value="ECO:0000315"/>
    <property type="project" value="MGI"/>
</dbReference>
<dbReference type="GO" id="GO:0051402">
    <property type="term" value="P:neuron apoptotic process"/>
    <property type="evidence" value="ECO:0000314"/>
    <property type="project" value="MGI"/>
</dbReference>
<dbReference type="GO" id="GO:0001541">
    <property type="term" value="P:ovarian follicle development"/>
    <property type="evidence" value="ECO:0000315"/>
    <property type="project" value="MGI"/>
</dbReference>
<dbReference type="GO" id="GO:0043065">
    <property type="term" value="P:positive regulation of apoptotic process"/>
    <property type="evidence" value="ECO:0000314"/>
    <property type="project" value="MGI"/>
</dbReference>
<dbReference type="GO" id="GO:0032946">
    <property type="term" value="P:positive regulation of mononuclear cell proliferation"/>
    <property type="evidence" value="ECO:0000314"/>
    <property type="project" value="MGI"/>
</dbReference>
<dbReference type="GO" id="GO:0032465">
    <property type="term" value="P:regulation of cytokinesis"/>
    <property type="evidence" value="ECO:0000250"/>
    <property type="project" value="UniProtKB"/>
</dbReference>
<dbReference type="GO" id="GO:0040008">
    <property type="term" value="P:regulation of growth"/>
    <property type="evidence" value="ECO:0000315"/>
    <property type="project" value="MGI"/>
</dbReference>
<dbReference type="GO" id="GO:0046902">
    <property type="term" value="P:regulation of mitochondrial membrane permeability"/>
    <property type="evidence" value="ECO:0007669"/>
    <property type="project" value="Ensembl"/>
</dbReference>
<dbReference type="GO" id="GO:0051881">
    <property type="term" value="P:regulation of mitochondrial membrane potential"/>
    <property type="evidence" value="ECO:0007669"/>
    <property type="project" value="Ensembl"/>
</dbReference>
<dbReference type="GO" id="GO:0001836">
    <property type="term" value="P:release of cytochrome c from mitochondria"/>
    <property type="evidence" value="ECO:0000316"/>
    <property type="project" value="MGI"/>
</dbReference>
<dbReference type="GO" id="GO:0046898">
    <property type="term" value="P:response to cycloheximide"/>
    <property type="evidence" value="ECO:0000314"/>
    <property type="project" value="MGI"/>
</dbReference>
<dbReference type="GO" id="GO:0034097">
    <property type="term" value="P:response to cytokine"/>
    <property type="evidence" value="ECO:0000266"/>
    <property type="project" value="MGI"/>
</dbReference>
<dbReference type="GO" id="GO:0009314">
    <property type="term" value="P:response to radiation"/>
    <property type="evidence" value="ECO:0000315"/>
    <property type="project" value="MGI"/>
</dbReference>
<dbReference type="GO" id="GO:0009615">
    <property type="term" value="P:response to virus"/>
    <property type="evidence" value="ECO:0000314"/>
    <property type="project" value="MGI"/>
</dbReference>
<dbReference type="GO" id="GO:0007283">
    <property type="term" value="P:spermatogenesis"/>
    <property type="evidence" value="ECO:0000316"/>
    <property type="project" value="MGI"/>
</dbReference>
<dbReference type="CDD" id="cd06845">
    <property type="entry name" value="Bcl-2_like"/>
    <property type="match status" value="1"/>
</dbReference>
<dbReference type="DisProt" id="DP02817"/>
<dbReference type="FunFam" id="1.10.437.10:FF:000003">
    <property type="entry name" value="Bcl-2-like protein 1"/>
    <property type="match status" value="1"/>
</dbReference>
<dbReference type="Gene3D" id="1.10.437.10">
    <property type="entry name" value="Blc2-like"/>
    <property type="match status" value="1"/>
</dbReference>
<dbReference type="IDEAL" id="IID50336"/>
<dbReference type="InterPro" id="IPR013279">
    <property type="entry name" value="Apop_reg_BclX"/>
</dbReference>
<dbReference type="InterPro" id="IPR036834">
    <property type="entry name" value="Bcl-2-like_sf"/>
</dbReference>
<dbReference type="InterPro" id="IPR046371">
    <property type="entry name" value="Bcl-2_BH1-3"/>
</dbReference>
<dbReference type="InterPro" id="IPR026298">
    <property type="entry name" value="Bcl-2_fam"/>
</dbReference>
<dbReference type="InterPro" id="IPR002475">
    <property type="entry name" value="Bcl2-like"/>
</dbReference>
<dbReference type="InterPro" id="IPR004725">
    <property type="entry name" value="Bcl2/BclX"/>
</dbReference>
<dbReference type="InterPro" id="IPR020717">
    <property type="entry name" value="Bcl2_BH1_motif_CS"/>
</dbReference>
<dbReference type="InterPro" id="IPR020726">
    <property type="entry name" value="Bcl2_BH2_motif_CS"/>
</dbReference>
<dbReference type="InterPro" id="IPR020728">
    <property type="entry name" value="Bcl2_BH3_motif_CS"/>
</dbReference>
<dbReference type="InterPro" id="IPR003093">
    <property type="entry name" value="Bcl2_BH4"/>
</dbReference>
<dbReference type="InterPro" id="IPR020731">
    <property type="entry name" value="Bcl2_BH4_motif_CS"/>
</dbReference>
<dbReference type="NCBIfam" id="TIGR00865">
    <property type="entry name" value="bcl-2"/>
    <property type="match status" value="1"/>
</dbReference>
<dbReference type="PANTHER" id="PTHR11256">
    <property type="entry name" value="BCL-2 RELATED"/>
    <property type="match status" value="1"/>
</dbReference>
<dbReference type="PANTHER" id="PTHR11256:SF12">
    <property type="entry name" value="BCL-2-LIKE PROTEIN 1"/>
    <property type="match status" value="1"/>
</dbReference>
<dbReference type="Pfam" id="PF00452">
    <property type="entry name" value="Bcl-2"/>
    <property type="match status" value="1"/>
</dbReference>
<dbReference type="Pfam" id="PF02180">
    <property type="entry name" value="BH4"/>
    <property type="match status" value="1"/>
</dbReference>
<dbReference type="PRINTS" id="PR01864">
    <property type="entry name" value="APOPREGBCLX"/>
</dbReference>
<dbReference type="PRINTS" id="PR01862">
    <property type="entry name" value="BCL2FAMILY"/>
</dbReference>
<dbReference type="SMART" id="SM00337">
    <property type="entry name" value="BCL"/>
    <property type="match status" value="1"/>
</dbReference>
<dbReference type="SMART" id="SM00265">
    <property type="entry name" value="BH4"/>
    <property type="match status" value="1"/>
</dbReference>
<dbReference type="SUPFAM" id="SSF56854">
    <property type="entry name" value="Bcl-2 inhibitors of programmed cell death"/>
    <property type="match status" value="1"/>
</dbReference>
<dbReference type="PROSITE" id="PS50062">
    <property type="entry name" value="BCL2_FAMILY"/>
    <property type="match status" value="1"/>
</dbReference>
<dbReference type="PROSITE" id="PS01080">
    <property type="entry name" value="BH1"/>
    <property type="match status" value="1"/>
</dbReference>
<dbReference type="PROSITE" id="PS01258">
    <property type="entry name" value="BH2"/>
    <property type="match status" value="1"/>
</dbReference>
<dbReference type="PROSITE" id="PS01259">
    <property type="entry name" value="BH3"/>
    <property type="match status" value="1"/>
</dbReference>
<dbReference type="PROSITE" id="PS01260">
    <property type="entry name" value="BH4_1"/>
    <property type="match status" value="1"/>
</dbReference>
<dbReference type="PROSITE" id="PS50063">
    <property type="entry name" value="BH4_2"/>
    <property type="match status" value="1"/>
</dbReference>
<organism>
    <name type="scientific">Mus musculus</name>
    <name type="common">Mouse</name>
    <dbReference type="NCBI Taxonomy" id="10090"/>
    <lineage>
        <taxon>Eukaryota</taxon>
        <taxon>Metazoa</taxon>
        <taxon>Chordata</taxon>
        <taxon>Craniata</taxon>
        <taxon>Vertebrata</taxon>
        <taxon>Euteleostomi</taxon>
        <taxon>Mammalia</taxon>
        <taxon>Eutheria</taxon>
        <taxon>Euarchontoglires</taxon>
        <taxon>Glires</taxon>
        <taxon>Rodentia</taxon>
        <taxon>Myomorpha</taxon>
        <taxon>Muroidea</taxon>
        <taxon>Muridae</taxon>
        <taxon>Murinae</taxon>
        <taxon>Mus</taxon>
        <taxon>Mus</taxon>
    </lineage>
</organism>
<name>B2CL1_MOUSE</name>
<gene>
    <name type="primary">Bcl2l1</name>
    <name type="synonym">Bcl2l</name>
    <name type="synonym">Bclx</name>
</gene>
<keyword id="KW-0002">3D-structure</keyword>
<keyword id="KW-0025">Alternative splicing</keyword>
<keyword id="KW-0053">Apoptosis</keyword>
<keyword id="KW-0963">Cytoplasm</keyword>
<keyword id="KW-0968">Cytoplasmic vesicle</keyword>
<keyword id="KW-0206">Cytoskeleton</keyword>
<keyword id="KW-0472">Membrane</keyword>
<keyword id="KW-0496">Mitochondrion</keyword>
<keyword id="KW-0999">Mitochondrion inner membrane</keyword>
<keyword id="KW-1000">Mitochondrion outer membrane</keyword>
<keyword id="KW-0539">Nucleus</keyword>
<keyword id="KW-0597">Phosphoprotein</keyword>
<keyword id="KW-1185">Reference proteome</keyword>
<keyword id="KW-0770">Synapse</keyword>
<keyword id="KW-0812">Transmembrane</keyword>
<keyword id="KW-1133">Transmembrane helix</keyword>
<keyword id="KW-0832">Ubl conjugation</keyword>
<proteinExistence type="evidence at protein level"/>
<reference key="1">
    <citation type="submission" date="1995-03" db="EMBL/GenBank/DDBJ databases">
        <title>IL-5 inhibits anti-IgM-induced apoptosis in an immature B cell line through induction of bcl-Xl.</title>
        <authorList>
            <person name="Kamesaki H."/>
            <person name="Michaud G.Y."/>
            <person name="Takatsu K."/>
            <person name="Okuma M."/>
        </authorList>
    </citation>
    <scope>NUCLEOTIDE SEQUENCE [MRNA] (ISOFORM BCL-X(L))</scope>
    <source>
        <strain>2A4B</strain>
        <tissue>B-cell</tissue>
    </source>
</reference>
<reference key="2">
    <citation type="journal article" date="1994" name="Development">
        <title>bcl-XL is the major bcl-x mRNA form expressed during murine development and its product localizes to mitochondria.</title>
        <authorList>
            <person name="Gonzalez-Garcia M."/>
            <person name="Perez-Ballestero R."/>
            <person name="Ding L."/>
            <person name="Duan L."/>
            <person name="Boise L.H."/>
            <person name="Thompson C.B."/>
            <person name="Nunez G."/>
        </authorList>
    </citation>
    <scope>NUCLEOTIDE SEQUENCE [MRNA] (ISOFORMS BCL-X(L) AND BCL-X(BETA))</scope>
    <scope>DEVELOPMENTAL STAGE</scope>
    <scope>SUBCELLULAR LOCATION</scope>
    <scope>TISSUE SPECIFICITY</scope>
    <source>
        <strain>C57BL/6J</strain>
        <tissue>Brain</tissue>
    </source>
</reference>
<reference key="3">
    <citation type="journal article" date="1994" name="J. Immunol.">
        <title>Cloning and molecular characterization of mouse bcl-x in B and T lymphocytes.</title>
        <authorList>
            <person name="Fang W."/>
            <person name="Rivard J.J."/>
            <person name="Mueller D.L."/>
            <person name="Behrens T.W."/>
        </authorList>
    </citation>
    <scope>NUCLEOTIDE SEQUENCE [MRNA] (ISOFORMS BCL-X(L); BCL-X(S) AND BCL-X(DELTA-TM))</scope>
    <source>
        <tissue>Pre-B cell</tissue>
    </source>
</reference>
<reference key="4">
    <citation type="journal article" date="1997" name="Immunity">
        <title>A novel Bcl-x isoform connected to the T cell receptor regulates apoptosis in T cells.</title>
        <authorList>
            <person name="Yang X.-F."/>
            <person name="Weber G.F."/>
            <person name="Cantor H."/>
        </authorList>
    </citation>
    <scope>NUCLEOTIDE SEQUENCE [MRNA] (ISOFORMS BCL-X(L) AND BCL-X(BETA))</scope>
    <scope>FUNCTION</scope>
    <source>
        <strain>C57BL/6 X CBA</strain>
        <tissue>Thymus</tissue>
    </source>
</reference>
<reference key="5">
    <citation type="journal article" date="1997" name="J. Immunol.">
        <title>Genomic organization, promoter region analysis, and chromosome localization of the mouse bcl-x gene.</title>
        <authorList>
            <person name="Grillot D.A."/>
            <person name="Gonzalez-Garcia M."/>
            <person name="Ekhterae D."/>
            <person name="Duan L."/>
            <person name="Inohara N."/>
            <person name="Ohta S."/>
            <person name="Seldin M.F."/>
            <person name="Nunez G."/>
        </authorList>
    </citation>
    <scope>NUCLEOTIDE SEQUENCE [GENOMIC DNA]</scope>
</reference>
<reference key="6">
    <citation type="journal article" date="2006" name="PLoS Biol.">
        <title>IAN family critically regulates survival and development of T lymphocytes.</title>
        <authorList>
            <person name="Nitta T."/>
            <person name="Nasreen M."/>
            <person name="Seike T."/>
            <person name="Goji A."/>
            <person name="Ohigashi I."/>
            <person name="Miyazaki T."/>
            <person name="Ohta T."/>
            <person name="Kanno M."/>
            <person name="Takahama Y."/>
        </authorList>
    </citation>
    <scope>INTERACTION WITH GIMAP3 AND GIMAP5</scope>
</reference>
<reference key="7">
    <citation type="journal article" date="2010" name="Cell">
        <title>A tissue-specific atlas of mouse protein phosphorylation and expression.</title>
        <authorList>
            <person name="Huttlin E.L."/>
            <person name="Jedrychowski M.P."/>
            <person name="Elias J.E."/>
            <person name="Goswami T."/>
            <person name="Rad R."/>
            <person name="Beausoleil S.A."/>
            <person name="Villen J."/>
            <person name="Haas W."/>
            <person name="Sowa M.E."/>
            <person name="Gygi S.P."/>
        </authorList>
    </citation>
    <scope>IDENTIFICATION BY MASS SPECTROMETRY [LARGE SCALE ANALYSIS]</scope>
    <source>
        <tissue>Brain</tissue>
        <tissue>Brown adipose tissue</tissue>
        <tissue>Heart</tissue>
        <tissue>Kidney</tissue>
        <tissue>Liver</tissue>
        <tissue>Lung</tissue>
        <tissue>Spleen</tissue>
        <tissue>Testis</tissue>
    </source>
</reference>
<reference key="8">
    <citation type="journal article" date="2011" name="J. Exp. Med.">
        <title>Critical role for Gimap5 in the survival of mouse hematopoietic stem and progenitor cells.</title>
        <authorList>
            <person name="Chen Y."/>
            <person name="Yu M."/>
            <person name="Dai X."/>
            <person name="Zogg M."/>
            <person name="Wen R."/>
            <person name="Weiler H."/>
            <person name="Wang D."/>
        </authorList>
    </citation>
    <scope>INTERACTION WITH GIMAP5 AND HSPA8</scope>
</reference>
<reference key="9">
    <citation type="journal article" date="2016" name="EMBO Rep.">
        <title>The deubiquitinase Usp27x stabilizes the BH3-only protein Bim and enhances apoptosis.</title>
        <authorList>
            <person name="Weber A."/>
            <person name="Heinlein M."/>
            <person name="Dengjel J."/>
            <person name="Alber C."/>
            <person name="Singh P.K."/>
            <person name="Haecker G."/>
        </authorList>
    </citation>
    <scope>INTERACTION WITH BCL2L11</scope>
</reference>
<reference key="10">
    <citation type="journal article" date="2003" name="Immunity">
        <title>The structure of a Bcl-xL/Bim fragment complex: implications for Bim function.</title>
        <authorList>
            <person name="Liu X."/>
            <person name="Dai S."/>
            <person name="Zhu Y."/>
            <person name="Marrack P."/>
            <person name="Kappler J.W."/>
        </authorList>
    </citation>
    <scope>X-RAY CRYSTALLOGRAPHY (1.65 ANGSTROMS) OF 1-196 IN COMPLEX WITH BCL2L11</scope>
</reference>
<protein>
    <recommendedName>
        <fullName>Bcl-2-like protein 1</fullName>
        <shortName>Bcl2-L-1</shortName>
    </recommendedName>
    <alternativeName>
        <fullName>Apoptosis regulator Bcl-X</fullName>
    </alternativeName>
</protein>
<accession>Q64373</accession>
<accession>O35844</accession>
<accession>Q60657</accession>
<accession>Q60658</accession>
<accession>Q61338</accession>
<feature type="chain" id="PRO_0000143063" description="Bcl-2-like protein 1">
    <location>
        <begin position="1"/>
        <end position="233"/>
    </location>
</feature>
<feature type="transmembrane region" description="Helical" evidence="4">
    <location>
        <begin position="210"/>
        <end position="226"/>
    </location>
</feature>
<feature type="region of interest" description="Disordered" evidence="5">
    <location>
        <begin position="27"/>
        <end position="73"/>
    </location>
</feature>
<feature type="short sequence motif" description="BH4">
    <location>
        <begin position="4"/>
        <end position="24"/>
    </location>
</feature>
<feature type="short sequence motif" description="BH3">
    <location>
        <begin position="86"/>
        <end position="100"/>
    </location>
</feature>
<feature type="short sequence motif" description="BH1">
    <location>
        <begin position="129"/>
        <end position="148"/>
    </location>
</feature>
<feature type="short sequence motif" description="BH2">
    <location>
        <begin position="180"/>
        <end position="195"/>
    </location>
</feature>
<feature type="modified residue" description="Phosphoserine; by PLK3" evidence="3">
    <location>
        <position position="49"/>
    </location>
</feature>
<feature type="modified residue" description="Phosphoserine; by CDK1" evidence="3">
    <location>
        <position position="62"/>
    </location>
</feature>
<feature type="splice variant" id="VSP_000517" description="In isoform Bcl-X(S)." evidence="12">
    <location>
        <begin position="126"/>
        <end position="188"/>
    </location>
</feature>
<feature type="splice variant" id="VSP_000518" description="In isoform Bcl-X(beta)." evidence="12">
    <original>DTFVDLYGNNAAAESRKGQERFNRWFLTGMTVAGVVLLGSLFSRK</original>
    <variation>VRTTPLVCPPLACVSLLCEHP</variation>
    <location>
        <begin position="189"/>
        <end position="233"/>
    </location>
</feature>
<feature type="splice variant" id="VSP_000519" description="In isoform Bcl-X(delta-TM)." evidence="12">
    <original>LYGNNAAAESRKGQERFNRWFLTGMTVAGVVLLGSLFSRK</original>
    <variation>GHDCGWCGSAGLTLQSEVTRH</variation>
    <location>
        <begin position="194"/>
        <end position="233"/>
    </location>
</feature>
<feature type="sequence conflict" description="In Ref. 4; AAC53459." evidence="12" ref="4">
    <original>QER</original>
    <variation>KEG</variation>
    <location>
        <begin position="207"/>
        <end position="209"/>
    </location>
</feature>
<feature type="helix" evidence="14">
    <location>
        <begin position="1"/>
        <end position="20"/>
    </location>
</feature>
<feature type="helix" evidence="15">
    <location>
        <begin position="24"/>
        <end position="26"/>
    </location>
</feature>
<feature type="helix" evidence="14">
    <location>
        <begin position="83"/>
        <end position="101"/>
    </location>
</feature>
<feature type="helix" evidence="13">
    <location>
        <begin position="102"/>
        <end position="105"/>
    </location>
</feature>
<feature type="helix" evidence="14">
    <location>
        <begin position="106"/>
        <end position="112"/>
    </location>
</feature>
<feature type="turn" evidence="13">
    <location>
        <begin position="116"/>
        <end position="118"/>
    </location>
</feature>
<feature type="helix" evidence="14">
    <location>
        <begin position="120"/>
        <end position="127"/>
    </location>
</feature>
<feature type="helix" evidence="14">
    <location>
        <begin position="128"/>
        <end position="131"/>
    </location>
</feature>
<feature type="helix" evidence="14">
    <location>
        <begin position="137"/>
        <end position="156"/>
    </location>
</feature>
<feature type="helix" evidence="14">
    <location>
        <begin position="162"/>
        <end position="177"/>
    </location>
</feature>
<feature type="helix" evidence="14">
    <location>
        <begin position="179"/>
        <end position="184"/>
    </location>
</feature>
<feature type="helix" evidence="14">
    <location>
        <begin position="187"/>
        <end position="195"/>
    </location>
</feature>
<comment type="function">
    <text evidence="11">Potent inhibitor of cell death. Inhibits activation of caspases. Appears to regulate cell death by blocking the voltage-dependent anion channel (VDAC) by binding to it and preventing the release of the caspase activator, CYC1, from the mitochondrial membrane. Also acts as a regulator of G2 checkpoint and progression to cytokinesis during mitosis.</text>
</comment>
<comment type="function">
    <text evidence="1 3">Isoform Bcl-X(L) also regulates presynaptic plasticity, including neurotransmitter release and recovery, number of axonal mitochondria as well as size and number of synaptic vesicle clusters. During synaptic stimulation, increases ATP availability from mitochondria through regulation of mitochondrial membrane ATP synthase F(1)F(0) activity and regulates endocytic vesicle retrieval in hippocampal neurons through association with DMN1L and stimulation of its GTPase activity in synaptic vesicles (By similarity). May attenuate inflammation impairing NLRP1-inflammasome activation, hence CASP1 activation and IL1B release (By similarity).</text>
</comment>
<comment type="function">
    <text evidence="1">Isoform Bcl-X(S) promotes apoptosis.</text>
</comment>
<comment type="subunit">
    <text evidence="2 3 6 7 8 9">Homodimer. Interacts with BAD. Interacts with PGAM5. Interacts with HEBP2. Interacts with p53/TP53 and BBC3; interaction with BBC3 disrupts the interaction with p53/TP53. Interacts with ATP5F1A and ATP5F1B; the interactions mediate the association of isoform Bcl-X(L) with the mitochondrial membrane ATP synthase F(1)F(0) ATP synthase (By similarity). Interacts with VDAC1 (By similarity). Interacts with BCL2L11 (via BH3) (PubMed:14499110, PubMed:27013495). Interacts with RNF183 (By similarity). Interacts with GIMAP3/IAN4 and GIMAP5/IAN5 (PubMed:16509771). Interacts with GIMAP5 and HSPA8/HSC70; the interaction between HSPA8 and BCL2L1 is impaired in the absence of GIMAP5 (PubMed:21502331). Interacts with isoform 4 of CLU; this interaction releases and activates BAX and promotes cell death (By similarity).</text>
</comment>
<comment type="subunit">
    <molecule>Isoform Bcl-X(L)</molecule>
    <text evidence="2 3">Forms heterodimers with BAX, BAK or BCL2; heterodimerization with BAX does not seem to be required for anti-apoptotic activity (By similarity). Interacts with isoform 1 of SIVA1; the interaction inhibits the anti-apoptotic activity (By similarity). Interacts with IKZF3 (By similarity). Interacts with RTL10/BOP (By similarity). Interacts with DNM1L and CLTA; DNM1L and BCL2L1 isoform BCL-X(L) may form a complex in synaptic vesicles that also contains clathrin and MFF (By similarity). Interacts (via the loop between motifs BH4 and BH3) with NLRP1 (via LRR repeats), but not with NLRP2, NLRP3, NLRP4, PYCARD, nor MEFV (By similarity). Interacts with BECN1 (By similarity).</text>
</comment>
<comment type="interaction">
    <interactant intactId="EBI-526361">
        <id>Q64373</id>
    </interactant>
    <interactant intactId="EBI-25487741">
        <id>P59637</id>
        <label>E</label>
    </interactant>
    <organismsDiffer>true</organismsDiffer>
    <experiments>2</experiments>
</comment>
<comment type="interaction">
    <interactant intactId="EBI-526380">
        <id>Q64373-1</id>
    </interactant>
    <interactant intactId="EBI-400328">
        <id>Q61337</id>
        <label>Bad</label>
    </interactant>
    <organismsDiffer>false</organismsDiffer>
    <experiments>2</experiments>
</comment>
<comment type="subcellular location">
    <subcellularLocation>
        <location evidence="10">Mitochondrion membrane</location>
        <topology evidence="10">Single-pass membrane protein</topology>
    </subcellularLocation>
    <subcellularLocation>
        <location evidence="1">Nucleus membrane</location>
        <topology evidence="1">Single-pass membrane protein</topology>
        <orientation evidence="1">Cytoplasmic side</orientation>
    </subcellularLocation>
    <subcellularLocation>
        <location evidence="10">Cytoplasm</location>
        <location evidence="10">Cytoskeleton</location>
        <location evidence="10">Microtubule organizing center</location>
        <location evidence="10">Centrosome</location>
    </subcellularLocation>
    <text>Localizes to the centrosome when phosphorylated at Ser-49.</text>
</comment>
<comment type="subcellular location">
    <molecule>Isoform Bcl-X(L)</molecule>
    <subcellularLocation>
        <location>Mitochondrion inner membrane</location>
    </subcellularLocation>
    <subcellularLocation>
        <location>Mitochondrion outer membrane</location>
    </subcellularLocation>
    <subcellularLocation>
        <location evidence="1">Mitochondrion matrix</location>
    </subcellularLocation>
    <subcellularLocation>
        <location evidence="1">Cytoplasmic vesicle</location>
        <location evidence="1">Secretory vesicle</location>
        <location evidence="1">Synaptic vesicle membrane</location>
    </subcellularLocation>
    <subcellularLocation>
        <location evidence="1">Cytoplasm</location>
        <location evidence="1">Cytosol</location>
    </subcellularLocation>
    <text evidence="1">After neuronal stimulation, translocates from cytosol to synaptic vesicle and mitochondrion membrane in a calmodulin-dependent manner.</text>
</comment>
<comment type="subcellular location">
    <molecule>Isoform Bcl-X(delta-TM)</molecule>
    <subcellularLocation>
        <location>Cytoplasm</location>
    </subcellularLocation>
</comment>
<comment type="alternative products">
    <event type="alternative splicing"/>
    <isoform>
        <id>Q64373-1</id>
        <name>Bcl-X(L)</name>
        <name>Bcl-xL</name>
        <sequence type="displayed"/>
    </isoform>
    <isoform>
        <id>Q64373-2</id>
        <name>Bcl-X(S)</name>
        <name>Bcl-xS</name>
        <sequence type="described" ref="VSP_000517"/>
    </isoform>
    <isoform>
        <id>Q64373-3</id>
        <name>Bcl-X(beta)</name>
        <sequence type="described" ref="VSP_000518"/>
    </isoform>
    <isoform>
        <id>Q64373-4</id>
        <name>Bcl-X(delta-TM)</name>
        <sequence type="described" ref="VSP_000519"/>
    </isoform>
</comment>
<comment type="tissue specificity">
    <text evidence="10">Widely expressed, with highest levels in the brain, thymus, bone marrow, and kidney. Bcl-X(L) and Bcl-X(delta-TM) expression is enhanced in B- and T-lymphocytes that have been activated.</text>
</comment>
<comment type="developmental stage">
    <text evidence="10">Bcl-X(beta) is expressed in both embryonal and postnatal tissues, whereas Bcl-X(L) is predominantly found in postnatal tissues.</text>
</comment>
<comment type="domain">
    <text>The BH4 motif is required for anti-apoptotic activity. The BH1 and BH2 motifs are required for both heterodimerization with other Bcl-2 family members and for repression of cell death.</text>
</comment>
<comment type="domain">
    <text evidence="3">The loop between motifs BH4 and BH3 is required for the interaction with NLRP1.</text>
</comment>
<comment type="PTM">
    <text evidence="1">Proteolytically cleaved by caspases during apoptosis. The cleaved protein, lacking the BH4 motif, has pro-apoptotic activity.</text>
</comment>
<comment type="PTM">
    <text evidence="1">Phosphorylated on Ser-62 by CDK1. This phosphorylation is partial in normal mitotic cells, but complete in G2-arrested cells upon DNA-damage, thus promoting subsequent apoptosis probably by triggering caspases-mediated proteolysis. Phosphorylated by PLK3, leading to regulate the G2 checkpoint and progression to cytokinesis during mitosis. Phosphorylation at Ser-49 appears during the S phase and G2, disappears rapidly in early mitosis during prometaphase, metaphase and early anaphase, and re-appears during telophase and cytokinesis (By similarity).</text>
</comment>
<comment type="PTM">
    <text evidence="3">Ubiquitinated by RNF183 during prolonged ER stress, leading to degradation by the proteosome.</text>
</comment>
<comment type="similarity">
    <text evidence="12">Belongs to the Bcl-2 family.</text>
</comment>
<evidence type="ECO:0000250" key="1"/>
<evidence type="ECO:0000250" key="2">
    <source>
        <dbReference type="UniProtKB" id="P53563"/>
    </source>
</evidence>
<evidence type="ECO:0000250" key="3">
    <source>
        <dbReference type="UniProtKB" id="Q07817"/>
    </source>
</evidence>
<evidence type="ECO:0000255" key="4"/>
<evidence type="ECO:0000256" key="5">
    <source>
        <dbReference type="SAM" id="MobiDB-lite"/>
    </source>
</evidence>
<evidence type="ECO:0000269" key="6">
    <source>
    </source>
</evidence>
<evidence type="ECO:0000269" key="7">
    <source>
    </source>
</evidence>
<evidence type="ECO:0000269" key="8">
    <source>
    </source>
</evidence>
<evidence type="ECO:0000269" key="9">
    <source>
    </source>
</evidence>
<evidence type="ECO:0000269" key="10">
    <source>
    </source>
</evidence>
<evidence type="ECO:0000269" key="11">
    <source>
    </source>
</evidence>
<evidence type="ECO:0000305" key="12"/>
<evidence type="ECO:0007829" key="13">
    <source>
        <dbReference type="PDB" id="1PQ1"/>
    </source>
</evidence>
<evidence type="ECO:0007829" key="14">
    <source>
        <dbReference type="PDB" id="3ILC"/>
    </source>
</evidence>
<evidence type="ECO:0007829" key="15">
    <source>
        <dbReference type="PDB" id="7WJH"/>
    </source>
</evidence>